<protein>
    <recommendedName>
        <fullName evidence="1">Large ribosomal subunit protein bL20</fullName>
    </recommendedName>
    <alternativeName>
        <fullName evidence="2">50S ribosomal protein L20</fullName>
    </alternativeName>
</protein>
<organism>
    <name type="scientific">Idiomarina loihiensis (strain ATCC BAA-735 / DSM 15497 / L2-TR)</name>
    <dbReference type="NCBI Taxonomy" id="283942"/>
    <lineage>
        <taxon>Bacteria</taxon>
        <taxon>Pseudomonadati</taxon>
        <taxon>Pseudomonadota</taxon>
        <taxon>Gammaproteobacteria</taxon>
        <taxon>Alteromonadales</taxon>
        <taxon>Idiomarinaceae</taxon>
        <taxon>Idiomarina</taxon>
    </lineage>
</organism>
<sequence length="117" mass="13327">MARVKRGVIARARHKKVLKQAKGYYGARSRVYRVAVQAVTKAGQYAYRDRRNKKRQFRQLWIVRINAAARQNGLSYSRFINGLKKASIEIDRKILADIAVHDQNGFAALVEKAKGAL</sequence>
<accession>Q5QYN7</accession>
<feature type="chain" id="PRO_0000243689" description="Large ribosomal subunit protein bL20">
    <location>
        <begin position="1"/>
        <end position="117"/>
    </location>
</feature>
<evidence type="ECO:0000255" key="1">
    <source>
        <dbReference type="HAMAP-Rule" id="MF_00382"/>
    </source>
</evidence>
<evidence type="ECO:0000305" key="2"/>
<dbReference type="EMBL" id="AE017340">
    <property type="protein sequence ID" value="AAV82236.1"/>
    <property type="molecule type" value="Genomic_DNA"/>
</dbReference>
<dbReference type="RefSeq" id="WP_011234642.1">
    <property type="nucleotide sequence ID" value="NC_006512.1"/>
</dbReference>
<dbReference type="SMR" id="Q5QYN7"/>
<dbReference type="STRING" id="283942.IL1396"/>
<dbReference type="GeneID" id="78251953"/>
<dbReference type="KEGG" id="ilo:IL1396"/>
<dbReference type="eggNOG" id="COG0292">
    <property type="taxonomic scope" value="Bacteria"/>
</dbReference>
<dbReference type="HOGENOM" id="CLU_123265_0_1_6"/>
<dbReference type="OrthoDB" id="9808966at2"/>
<dbReference type="Proteomes" id="UP000001171">
    <property type="component" value="Chromosome"/>
</dbReference>
<dbReference type="GO" id="GO:1990904">
    <property type="term" value="C:ribonucleoprotein complex"/>
    <property type="evidence" value="ECO:0007669"/>
    <property type="project" value="UniProtKB-KW"/>
</dbReference>
<dbReference type="GO" id="GO:0005840">
    <property type="term" value="C:ribosome"/>
    <property type="evidence" value="ECO:0007669"/>
    <property type="project" value="UniProtKB-KW"/>
</dbReference>
<dbReference type="GO" id="GO:0019843">
    <property type="term" value="F:rRNA binding"/>
    <property type="evidence" value="ECO:0007669"/>
    <property type="project" value="UniProtKB-UniRule"/>
</dbReference>
<dbReference type="GO" id="GO:0003735">
    <property type="term" value="F:structural constituent of ribosome"/>
    <property type="evidence" value="ECO:0007669"/>
    <property type="project" value="InterPro"/>
</dbReference>
<dbReference type="GO" id="GO:0000027">
    <property type="term" value="P:ribosomal large subunit assembly"/>
    <property type="evidence" value="ECO:0007669"/>
    <property type="project" value="UniProtKB-UniRule"/>
</dbReference>
<dbReference type="GO" id="GO:0006412">
    <property type="term" value="P:translation"/>
    <property type="evidence" value="ECO:0007669"/>
    <property type="project" value="InterPro"/>
</dbReference>
<dbReference type="CDD" id="cd07026">
    <property type="entry name" value="Ribosomal_L20"/>
    <property type="match status" value="1"/>
</dbReference>
<dbReference type="FunFam" id="1.10.1900.20:FF:000001">
    <property type="entry name" value="50S ribosomal protein L20"/>
    <property type="match status" value="1"/>
</dbReference>
<dbReference type="Gene3D" id="6.10.160.10">
    <property type="match status" value="1"/>
</dbReference>
<dbReference type="Gene3D" id="1.10.1900.20">
    <property type="entry name" value="Ribosomal protein L20"/>
    <property type="match status" value="1"/>
</dbReference>
<dbReference type="HAMAP" id="MF_00382">
    <property type="entry name" value="Ribosomal_bL20"/>
    <property type="match status" value="1"/>
</dbReference>
<dbReference type="InterPro" id="IPR005813">
    <property type="entry name" value="Ribosomal_bL20"/>
</dbReference>
<dbReference type="InterPro" id="IPR049946">
    <property type="entry name" value="RIBOSOMAL_L20_CS"/>
</dbReference>
<dbReference type="InterPro" id="IPR035566">
    <property type="entry name" value="Ribosomal_protein_bL20_C"/>
</dbReference>
<dbReference type="NCBIfam" id="TIGR01032">
    <property type="entry name" value="rplT_bact"/>
    <property type="match status" value="1"/>
</dbReference>
<dbReference type="PANTHER" id="PTHR10986">
    <property type="entry name" value="39S RIBOSOMAL PROTEIN L20"/>
    <property type="match status" value="1"/>
</dbReference>
<dbReference type="Pfam" id="PF00453">
    <property type="entry name" value="Ribosomal_L20"/>
    <property type="match status" value="1"/>
</dbReference>
<dbReference type="PRINTS" id="PR00062">
    <property type="entry name" value="RIBOSOMALL20"/>
</dbReference>
<dbReference type="SUPFAM" id="SSF74731">
    <property type="entry name" value="Ribosomal protein L20"/>
    <property type="match status" value="1"/>
</dbReference>
<dbReference type="PROSITE" id="PS00937">
    <property type="entry name" value="RIBOSOMAL_L20"/>
    <property type="match status" value="1"/>
</dbReference>
<name>RL20_IDILO</name>
<gene>
    <name evidence="1" type="primary">rplT</name>
    <name type="ordered locus">IL1396</name>
</gene>
<keyword id="KW-1185">Reference proteome</keyword>
<keyword id="KW-0687">Ribonucleoprotein</keyword>
<keyword id="KW-0689">Ribosomal protein</keyword>
<keyword id="KW-0694">RNA-binding</keyword>
<keyword id="KW-0699">rRNA-binding</keyword>
<proteinExistence type="inferred from homology"/>
<comment type="function">
    <text evidence="1">Binds directly to 23S ribosomal RNA and is necessary for the in vitro assembly process of the 50S ribosomal subunit. It is not involved in the protein synthesizing functions of that subunit.</text>
</comment>
<comment type="similarity">
    <text evidence="1">Belongs to the bacterial ribosomal protein bL20 family.</text>
</comment>
<reference key="1">
    <citation type="journal article" date="2004" name="Proc. Natl. Acad. Sci. U.S.A.">
        <title>Genome sequence of the deep-sea gamma-proteobacterium Idiomarina loihiensis reveals amino acid fermentation as a source of carbon and energy.</title>
        <authorList>
            <person name="Hou S."/>
            <person name="Saw J.H."/>
            <person name="Lee K.S."/>
            <person name="Freitas T.A."/>
            <person name="Belisle C."/>
            <person name="Kawarabayasi Y."/>
            <person name="Donachie S.P."/>
            <person name="Pikina A."/>
            <person name="Galperin M.Y."/>
            <person name="Koonin E.V."/>
            <person name="Makarova K.S."/>
            <person name="Omelchenko M.V."/>
            <person name="Sorokin A."/>
            <person name="Wolf Y.I."/>
            <person name="Li Q.X."/>
            <person name="Keum Y.S."/>
            <person name="Campbell S."/>
            <person name="Denery J."/>
            <person name="Aizawa S."/>
            <person name="Shibata S."/>
            <person name="Malahoff A."/>
            <person name="Alam M."/>
        </authorList>
    </citation>
    <scope>NUCLEOTIDE SEQUENCE [LARGE SCALE GENOMIC DNA]</scope>
    <source>
        <strain>ATCC BAA-735 / DSM 15497 / L2-TR</strain>
    </source>
</reference>